<feature type="signal peptide" evidence="2">
    <location>
        <begin position="1"/>
        <end position="22"/>
    </location>
</feature>
<feature type="chain" id="PRO_0000014631" description="Lymphocyte activation gene 3 protein">
    <location>
        <begin position="23"/>
        <end position="525"/>
    </location>
</feature>
<feature type="chain" id="PRO_0000446642" description="Secreted lymphocyte activation gene 3 protein" evidence="1">
    <location>
        <begin position="23"/>
        <end status="unknown"/>
    </location>
</feature>
<feature type="topological domain" description="Extracellular" evidence="2">
    <location>
        <begin position="23"/>
        <end position="450"/>
    </location>
</feature>
<feature type="transmembrane region" description="Helical" evidence="2">
    <location>
        <begin position="451"/>
        <end position="471"/>
    </location>
</feature>
<feature type="topological domain" description="Cytoplasmic" evidence="2">
    <location>
        <begin position="472"/>
        <end position="525"/>
    </location>
</feature>
<feature type="domain" description="Ig-like V-type">
    <location>
        <begin position="37"/>
        <end position="167"/>
    </location>
</feature>
<feature type="domain" description="Ig-like C2-type 1">
    <location>
        <begin position="168"/>
        <end position="252"/>
    </location>
</feature>
<feature type="domain" description="Ig-like C2-type 2">
    <location>
        <begin position="265"/>
        <end position="343"/>
    </location>
</feature>
<feature type="domain" description="Ig-like C2-type 3">
    <location>
        <begin position="348"/>
        <end position="419"/>
    </location>
</feature>
<feature type="region of interest" description="Interaction with FGL1" evidence="9 13">
    <location>
        <begin position="37"/>
        <end position="252"/>
    </location>
</feature>
<feature type="region of interest" description="Disordered" evidence="4">
    <location>
        <begin position="62"/>
        <end position="97"/>
    </location>
</feature>
<feature type="region of interest" description="Connecting peptide" evidence="1">
    <location>
        <begin position="429"/>
        <end position="450"/>
    </location>
</feature>
<feature type="region of interest" description="Disordered" evidence="4">
    <location>
        <begin position="487"/>
        <end position="525"/>
    </location>
</feature>
<feature type="region of interest" description="12 X 2 AA tandem repeats of E-X">
    <location>
        <begin position="501"/>
        <end position="524"/>
    </location>
</feature>
<feature type="short sequence motif" description="KIEELE motif" evidence="1">
    <location>
        <begin position="498"/>
        <end position="503"/>
    </location>
</feature>
<feature type="compositionally biased region" description="Pro residues" evidence="4">
    <location>
        <begin position="69"/>
        <end position="87"/>
    </location>
</feature>
<feature type="compositionally biased region" description="Acidic residues" evidence="4">
    <location>
        <begin position="502"/>
        <end position="525"/>
    </location>
</feature>
<feature type="glycosylation site" description="N-linked (GlcNAc...) asparagine" evidence="2">
    <location>
        <position position="188"/>
    </location>
</feature>
<feature type="glycosylation site" description="N-linked (GlcNAc...) asparagine" evidence="2">
    <location>
        <position position="250"/>
    </location>
</feature>
<feature type="glycosylation site" description="N-linked (GlcNAc...) asparagine" evidence="2">
    <location>
        <position position="256"/>
    </location>
</feature>
<feature type="glycosylation site" description="N-linked (GlcNAc...) asparagine" evidence="2">
    <location>
        <position position="343"/>
    </location>
</feature>
<feature type="disulfide bond" evidence="3">
    <location>
        <begin position="44"/>
        <end position="160"/>
    </location>
</feature>
<feature type="disulfide bond" evidence="3">
    <location>
        <begin position="189"/>
        <end position="241"/>
    </location>
</feature>
<feature type="disulfide bond" evidence="3">
    <location>
        <begin position="282"/>
        <end position="333"/>
    </location>
</feature>
<feature type="disulfide bond" evidence="3">
    <location>
        <begin position="369"/>
        <end position="412"/>
    </location>
</feature>
<feature type="splice variant" id="VSP_056311" description="In isoform 2." evidence="16">
    <original>VTPKSFGS</original>
    <variation>GQPQVGKE</variation>
    <location>
        <begin position="353"/>
        <end position="360"/>
    </location>
</feature>
<feature type="splice variant" id="VSP_056312" description="In isoform 2." evidence="16">
    <location>
        <begin position="361"/>
        <end position="525"/>
    </location>
</feature>
<feature type="sequence variant" id="VAR_058295" description="In dbSNP:rs870849." evidence="6 7 15">
    <original>I</original>
    <variation>T</variation>
    <location>
        <position position="455"/>
    </location>
</feature>
<feature type="mutagenesis site" description="Does not affect binding to MHC class II (MHC-II)." evidence="13">
    <original>Q</original>
    <variation>A</variation>
    <location>
        <position position="35"/>
    </location>
</feature>
<feature type="mutagenesis site" description="Reduced binding to MHC class II (MHC-II)." evidence="13">
    <original>D</original>
    <variation>A</variation>
    <location>
        <position position="52"/>
    </location>
</feature>
<feature type="mutagenesis site" description="Reduced binding to MHC class II (MHC-II)." evidence="13">
    <original>H</original>
    <variation>A</variation>
    <location>
        <position position="78"/>
    </location>
</feature>
<feature type="mutagenesis site" description="Does not significantly affect binding to MHC class II (MHC-II)." evidence="13">
    <original>H</original>
    <variation>F</variation>
    <location>
        <position position="78"/>
    </location>
</feature>
<feature type="mutagenesis site" description="Does not affect binding to MHC class II (MHC-II)." evidence="13">
    <original>H</original>
    <variation>A</variation>
    <variation>F</variation>
    <location>
        <position position="85"/>
    </location>
</feature>
<feature type="mutagenesis site" description="Increased binding to MHC class II (MHC-II)." evidence="13">
    <original>R</original>
    <variation>E</variation>
    <location>
        <position position="95"/>
    </location>
</feature>
<feature type="mutagenesis site" description="Increased binding to MHC class II (MHC-II)." evidence="13">
    <original>R</original>
    <variation>A</variation>
    <variation>E</variation>
    <location>
        <position position="97"/>
    </location>
</feature>
<feature type="mutagenesis site" description="Increased binding to MHC class II (MHC-II)." evidence="13">
    <original>R</original>
    <variation>E</variation>
    <location>
        <position position="98"/>
    </location>
</feature>
<feature type="mutagenesis site" description="Abolishes binding to MHC class II (MHC-II) without affecting interaction with FGL1." evidence="9 13">
    <original>Y</original>
    <variation>F</variation>
    <location>
        <position position="99"/>
    </location>
</feature>
<feature type="mutagenesis site" description="Reduced binding to MHC class II (MHC-II)." evidence="13">
    <original>R</original>
    <variation>A</variation>
    <location>
        <position position="110"/>
    </location>
</feature>
<feature type="mutagenesis site" description="Reduced binding to MHC class II (MHC-II)." evidence="13">
    <original>R</original>
    <variation>A</variation>
    <location>
        <position position="125"/>
    </location>
</feature>
<feature type="mutagenesis site" description="Does not affect binding to MHC class II (MHC-II)." evidence="13">
    <original>R</original>
    <variation>K</variation>
    <location>
        <position position="129"/>
    </location>
</feature>
<feature type="mutagenesis site" description="Reduced binding to MHC class II (MHC-II)." evidence="13">
    <original>D</original>
    <variation>A</variation>
    <location>
        <position position="131"/>
    </location>
</feature>
<feature type="mutagenesis site" description="Reduced binding to MHC class II (MHC-II)." evidence="13">
    <original>R</original>
    <variation>A</variation>
    <location>
        <position position="137"/>
    </location>
</feature>
<feature type="mutagenesis site" description="Slightly affects binding to MHC class II (MHC-II)." evidence="13">
    <original>DR</original>
    <variation>AA</variation>
    <location>
        <begin position="155"/>
        <end position="156"/>
    </location>
</feature>
<feature type="mutagenesis site" description="Does not affect binding to MHC class II (MHC-II)." evidence="13">
    <original>D</original>
    <variation>L</variation>
    <location>
        <position position="247"/>
    </location>
</feature>
<feature type="strand" evidence="20">
    <location>
        <begin position="268"/>
        <end position="273"/>
    </location>
</feature>
<feature type="strand" evidence="20">
    <location>
        <begin position="278"/>
        <end position="280"/>
    </location>
</feature>
<feature type="strand" evidence="20">
    <location>
        <begin position="294"/>
        <end position="299"/>
    </location>
</feature>
<feature type="strand" evidence="20">
    <location>
        <begin position="307"/>
        <end position="315"/>
    </location>
</feature>
<feature type="strand" evidence="20">
    <location>
        <begin position="318"/>
        <end position="320"/>
    </location>
</feature>
<feature type="helix" evidence="20">
    <location>
        <begin position="325"/>
        <end position="327"/>
    </location>
</feature>
<feature type="strand" evidence="20">
    <location>
        <begin position="329"/>
        <end position="336"/>
    </location>
</feature>
<feature type="strand" evidence="20">
    <location>
        <begin position="341"/>
        <end position="355"/>
    </location>
</feature>
<feature type="turn" evidence="20">
    <location>
        <begin position="361"/>
        <end position="363"/>
    </location>
</feature>
<feature type="strand" evidence="20">
    <location>
        <begin position="367"/>
        <end position="373"/>
    </location>
</feature>
<feature type="strand" evidence="20">
    <location>
        <begin position="378"/>
        <end position="386"/>
    </location>
</feature>
<feature type="strand" evidence="20">
    <location>
        <begin position="392"/>
        <end position="398"/>
    </location>
</feature>
<feature type="helix" evidence="20">
    <location>
        <begin position="402"/>
        <end position="407"/>
    </location>
</feature>
<feature type="strand" evidence="20">
    <location>
        <begin position="410"/>
        <end position="416"/>
    </location>
</feature>
<feature type="strand" evidence="20">
    <location>
        <begin position="419"/>
        <end position="426"/>
    </location>
</feature>
<name>LAG3_HUMAN</name>
<reference key="1">
    <citation type="journal article" date="1990" name="J. Exp. Med.">
        <title>LAG-3, a novel lymphocyte activation gene closely related to CD4.</title>
        <authorList>
            <person name="Triebel F."/>
            <person name="Jitsukawa S."/>
            <person name="Baixeras E."/>
            <person name="Roman-Roman S."/>
            <person name="Genevee C."/>
            <person name="Viegas-Pequignot E."/>
            <person name="Hercend T."/>
        </authorList>
    </citation>
    <scope>NUCLEOTIDE SEQUENCE [MRNA] (ISOFORM 1)</scope>
    <scope>SUBCELLULAR LOCATION</scope>
    <scope>TISSUE SPECIFICITY</scope>
    <scope>VARIANT THR-455</scope>
</reference>
<reference key="2">
    <citation type="submission" date="2001-09" db="EMBL/GenBank/DDBJ databases">
        <authorList>
            <person name="Triebel F."/>
        </authorList>
    </citation>
    <scope>SEQUENCE REVISION TO C-TERMINUS</scope>
</reference>
<reference key="3">
    <citation type="journal article" date="2004" name="Nat. Genet.">
        <title>Complete sequencing and characterization of 21,243 full-length human cDNAs.</title>
        <authorList>
            <person name="Ota T."/>
            <person name="Suzuki Y."/>
            <person name="Nishikawa T."/>
            <person name="Otsuki T."/>
            <person name="Sugiyama T."/>
            <person name="Irie R."/>
            <person name="Wakamatsu A."/>
            <person name="Hayashi K."/>
            <person name="Sato H."/>
            <person name="Nagai K."/>
            <person name="Kimura K."/>
            <person name="Makita H."/>
            <person name="Sekine M."/>
            <person name="Obayashi M."/>
            <person name="Nishi T."/>
            <person name="Shibahara T."/>
            <person name="Tanaka T."/>
            <person name="Ishii S."/>
            <person name="Yamamoto J."/>
            <person name="Saito K."/>
            <person name="Kawai Y."/>
            <person name="Isono Y."/>
            <person name="Nakamura Y."/>
            <person name="Nagahari K."/>
            <person name="Murakami K."/>
            <person name="Yasuda T."/>
            <person name="Iwayanagi T."/>
            <person name="Wagatsuma M."/>
            <person name="Shiratori A."/>
            <person name="Sudo H."/>
            <person name="Hosoiri T."/>
            <person name="Kaku Y."/>
            <person name="Kodaira H."/>
            <person name="Kondo H."/>
            <person name="Sugawara M."/>
            <person name="Takahashi M."/>
            <person name="Kanda K."/>
            <person name="Yokoi T."/>
            <person name="Furuya T."/>
            <person name="Kikkawa E."/>
            <person name="Omura Y."/>
            <person name="Abe K."/>
            <person name="Kamihara K."/>
            <person name="Katsuta N."/>
            <person name="Sato K."/>
            <person name="Tanikawa M."/>
            <person name="Yamazaki M."/>
            <person name="Ninomiya K."/>
            <person name="Ishibashi T."/>
            <person name="Yamashita H."/>
            <person name="Murakawa K."/>
            <person name="Fujimori K."/>
            <person name="Tanai H."/>
            <person name="Kimata M."/>
            <person name="Watanabe M."/>
            <person name="Hiraoka S."/>
            <person name="Chiba Y."/>
            <person name="Ishida S."/>
            <person name="Ono Y."/>
            <person name="Takiguchi S."/>
            <person name="Watanabe S."/>
            <person name="Yosida M."/>
            <person name="Hotuta T."/>
            <person name="Kusano J."/>
            <person name="Kanehori K."/>
            <person name="Takahashi-Fujii A."/>
            <person name="Hara H."/>
            <person name="Tanase T.-O."/>
            <person name="Nomura Y."/>
            <person name="Togiya S."/>
            <person name="Komai F."/>
            <person name="Hara R."/>
            <person name="Takeuchi K."/>
            <person name="Arita M."/>
            <person name="Imose N."/>
            <person name="Musashino K."/>
            <person name="Yuuki H."/>
            <person name="Oshima A."/>
            <person name="Sasaki N."/>
            <person name="Aotsuka S."/>
            <person name="Yoshikawa Y."/>
            <person name="Matsunawa H."/>
            <person name="Ichihara T."/>
            <person name="Shiohata N."/>
            <person name="Sano S."/>
            <person name="Moriya S."/>
            <person name="Momiyama H."/>
            <person name="Satoh N."/>
            <person name="Takami S."/>
            <person name="Terashima Y."/>
            <person name="Suzuki O."/>
            <person name="Nakagawa S."/>
            <person name="Senoh A."/>
            <person name="Mizoguchi H."/>
            <person name="Goto Y."/>
            <person name="Shimizu F."/>
            <person name="Wakebe H."/>
            <person name="Hishigaki H."/>
            <person name="Watanabe T."/>
            <person name="Sugiyama A."/>
            <person name="Takemoto M."/>
            <person name="Kawakami B."/>
            <person name="Yamazaki M."/>
            <person name="Watanabe K."/>
            <person name="Kumagai A."/>
            <person name="Itakura S."/>
            <person name="Fukuzumi Y."/>
            <person name="Fujimori Y."/>
            <person name="Komiyama M."/>
            <person name="Tashiro H."/>
            <person name="Tanigami A."/>
            <person name="Fujiwara T."/>
            <person name="Ono T."/>
            <person name="Yamada K."/>
            <person name="Fujii Y."/>
            <person name="Ozaki K."/>
            <person name="Hirao M."/>
            <person name="Ohmori Y."/>
            <person name="Kawabata A."/>
            <person name="Hikiji T."/>
            <person name="Kobatake N."/>
            <person name="Inagaki H."/>
            <person name="Ikema Y."/>
            <person name="Okamoto S."/>
            <person name="Okitani R."/>
            <person name="Kawakami T."/>
            <person name="Noguchi S."/>
            <person name="Itoh T."/>
            <person name="Shigeta K."/>
            <person name="Senba T."/>
            <person name="Matsumura K."/>
            <person name="Nakajima Y."/>
            <person name="Mizuno T."/>
            <person name="Morinaga M."/>
            <person name="Sasaki M."/>
            <person name="Togashi T."/>
            <person name="Oyama M."/>
            <person name="Hata H."/>
            <person name="Watanabe M."/>
            <person name="Komatsu T."/>
            <person name="Mizushima-Sugano J."/>
            <person name="Satoh T."/>
            <person name="Shirai Y."/>
            <person name="Takahashi Y."/>
            <person name="Nakagawa K."/>
            <person name="Okumura K."/>
            <person name="Nagase T."/>
            <person name="Nomura N."/>
            <person name="Kikuchi H."/>
            <person name="Masuho Y."/>
            <person name="Yamashita R."/>
            <person name="Nakai K."/>
            <person name="Yada T."/>
            <person name="Nakamura Y."/>
            <person name="Ohara O."/>
            <person name="Isogai T."/>
            <person name="Sugano S."/>
        </authorList>
    </citation>
    <scope>NUCLEOTIDE SEQUENCE [LARGE SCALE MRNA] (ISOFORM 1)</scope>
    <scope>VARIANT THR-455</scope>
    <source>
        <tissue>Synovium</tissue>
    </source>
</reference>
<reference key="4">
    <citation type="journal article" date="2006" name="Nature">
        <title>The finished DNA sequence of human chromosome 12.</title>
        <authorList>
            <person name="Scherer S.E."/>
            <person name="Muzny D.M."/>
            <person name="Buhay C.J."/>
            <person name="Chen R."/>
            <person name="Cree A."/>
            <person name="Ding Y."/>
            <person name="Dugan-Rocha S."/>
            <person name="Gill R."/>
            <person name="Gunaratne P."/>
            <person name="Harris R.A."/>
            <person name="Hawes A.C."/>
            <person name="Hernandez J."/>
            <person name="Hodgson A.V."/>
            <person name="Hume J."/>
            <person name="Jackson A."/>
            <person name="Khan Z.M."/>
            <person name="Kovar-Smith C."/>
            <person name="Lewis L.R."/>
            <person name="Lozado R.J."/>
            <person name="Metzker M.L."/>
            <person name="Milosavljevic A."/>
            <person name="Miner G.R."/>
            <person name="Montgomery K.T."/>
            <person name="Morgan M.B."/>
            <person name="Nazareth L.V."/>
            <person name="Scott G."/>
            <person name="Sodergren E."/>
            <person name="Song X.-Z."/>
            <person name="Steffen D."/>
            <person name="Lovering R.C."/>
            <person name="Wheeler D.A."/>
            <person name="Worley K.C."/>
            <person name="Yuan Y."/>
            <person name="Zhang Z."/>
            <person name="Adams C.Q."/>
            <person name="Ansari-Lari M.A."/>
            <person name="Ayele M."/>
            <person name="Brown M.J."/>
            <person name="Chen G."/>
            <person name="Chen Z."/>
            <person name="Clerc-Blankenburg K.P."/>
            <person name="Davis C."/>
            <person name="Delgado O."/>
            <person name="Dinh H.H."/>
            <person name="Draper H."/>
            <person name="Gonzalez-Garay M.L."/>
            <person name="Havlak P."/>
            <person name="Jackson L.R."/>
            <person name="Jacob L.S."/>
            <person name="Kelly S.H."/>
            <person name="Li L."/>
            <person name="Li Z."/>
            <person name="Liu J."/>
            <person name="Liu W."/>
            <person name="Lu J."/>
            <person name="Maheshwari M."/>
            <person name="Nguyen B.-V."/>
            <person name="Okwuonu G.O."/>
            <person name="Pasternak S."/>
            <person name="Perez L.M."/>
            <person name="Plopper F.J.H."/>
            <person name="Santibanez J."/>
            <person name="Shen H."/>
            <person name="Tabor P.E."/>
            <person name="Verduzco D."/>
            <person name="Waldron L."/>
            <person name="Wang Q."/>
            <person name="Williams G.A."/>
            <person name="Zhang J."/>
            <person name="Zhou J."/>
            <person name="Allen C.C."/>
            <person name="Amin A.G."/>
            <person name="Anyalebechi V."/>
            <person name="Bailey M."/>
            <person name="Barbaria J.A."/>
            <person name="Bimage K.E."/>
            <person name="Bryant N.P."/>
            <person name="Burch P.E."/>
            <person name="Burkett C.E."/>
            <person name="Burrell K.L."/>
            <person name="Calderon E."/>
            <person name="Cardenas V."/>
            <person name="Carter K."/>
            <person name="Casias K."/>
            <person name="Cavazos I."/>
            <person name="Cavazos S.R."/>
            <person name="Ceasar H."/>
            <person name="Chacko J."/>
            <person name="Chan S.N."/>
            <person name="Chavez D."/>
            <person name="Christopoulos C."/>
            <person name="Chu J."/>
            <person name="Cockrell R."/>
            <person name="Cox C.D."/>
            <person name="Dang M."/>
            <person name="Dathorne S.R."/>
            <person name="David R."/>
            <person name="Davis C.M."/>
            <person name="Davy-Carroll L."/>
            <person name="Deshazo D.R."/>
            <person name="Donlin J.E."/>
            <person name="D'Souza L."/>
            <person name="Eaves K.A."/>
            <person name="Egan A."/>
            <person name="Emery-Cohen A.J."/>
            <person name="Escotto M."/>
            <person name="Flagg N."/>
            <person name="Forbes L.D."/>
            <person name="Gabisi A.M."/>
            <person name="Garza M."/>
            <person name="Hamilton C."/>
            <person name="Henderson N."/>
            <person name="Hernandez O."/>
            <person name="Hines S."/>
            <person name="Hogues M.E."/>
            <person name="Huang M."/>
            <person name="Idlebird D.G."/>
            <person name="Johnson R."/>
            <person name="Jolivet A."/>
            <person name="Jones S."/>
            <person name="Kagan R."/>
            <person name="King L.M."/>
            <person name="Leal B."/>
            <person name="Lebow H."/>
            <person name="Lee S."/>
            <person name="LeVan J.M."/>
            <person name="Lewis L.C."/>
            <person name="London P."/>
            <person name="Lorensuhewa L.M."/>
            <person name="Loulseged H."/>
            <person name="Lovett D.A."/>
            <person name="Lucier A."/>
            <person name="Lucier R.L."/>
            <person name="Ma J."/>
            <person name="Madu R.C."/>
            <person name="Mapua P."/>
            <person name="Martindale A.D."/>
            <person name="Martinez E."/>
            <person name="Massey E."/>
            <person name="Mawhiney S."/>
            <person name="Meador M.G."/>
            <person name="Mendez S."/>
            <person name="Mercado C."/>
            <person name="Mercado I.C."/>
            <person name="Merritt C.E."/>
            <person name="Miner Z.L."/>
            <person name="Minja E."/>
            <person name="Mitchell T."/>
            <person name="Mohabbat F."/>
            <person name="Mohabbat K."/>
            <person name="Montgomery B."/>
            <person name="Moore N."/>
            <person name="Morris S."/>
            <person name="Munidasa M."/>
            <person name="Ngo R.N."/>
            <person name="Nguyen N.B."/>
            <person name="Nickerson E."/>
            <person name="Nwaokelemeh O.O."/>
            <person name="Nwokenkwo S."/>
            <person name="Obregon M."/>
            <person name="Oguh M."/>
            <person name="Oragunye N."/>
            <person name="Oviedo R.J."/>
            <person name="Parish B.J."/>
            <person name="Parker D.N."/>
            <person name="Parrish J."/>
            <person name="Parks K.L."/>
            <person name="Paul H.A."/>
            <person name="Payton B.A."/>
            <person name="Perez A."/>
            <person name="Perrin W."/>
            <person name="Pickens A."/>
            <person name="Primus E.L."/>
            <person name="Pu L.-L."/>
            <person name="Puazo M."/>
            <person name="Quiles M.M."/>
            <person name="Quiroz J.B."/>
            <person name="Rabata D."/>
            <person name="Reeves K."/>
            <person name="Ruiz S.J."/>
            <person name="Shao H."/>
            <person name="Sisson I."/>
            <person name="Sonaike T."/>
            <person name="Sorelle R.P."/>
            <person name="Sutton A.E."/>
            <person name="Svatek A.F."/>
            <person name="Svetz L.A."/>
            <person name="Tamerisa K.S."/>
            <person name="Taylor T.R."/>
            <person name="Teague B."/>
            <person name="Thomas N."/>
            <person name="Thorn R.D."/>
            <person name="Trejos Z.Y."/>
            <person name="Trevino B.K."/>
            <person name="Ukegbu O.N."/>
            <person name="Urban J.B."/>
            <person name="Vasquez L.I."/>
            <person name="Vera V.A."/>
            <person name="Villasana D.M."/>
            <person name="Wang L."/>
            <person name="Ward-Moore S."/>
            <person name="Warren J.T."/>
            <person name="Wei X."/>
            <person name="White F."/>
            <person name="Williamson A.L."/>
            <person name="Wleczyk R."/>
            <person name="Wooden H.S."/>
            <person name="Wooden S.H."/>
            <person name="Yen J."/>
            <person name="Yoon L."/>
            <person name="Yoon V."/>
            <person name="Zorrilla S.E."/>
            <person name="Nelson D."/>
            <person name="Kucherlapati R."/>
            <person name="Weinstock G."/>
            <person name="Gibbs R.A."/>
        </authorList>
    </citation>
    <scope>NUCLEOTIDE SEQUENCE [LARGE SCALE GENOMIC DNA]</scope>
</reference>
<reference key="5">
    <citation type="submission" date="2005-09" db="EMBL/GenBank/DDBJ databases">
        <authorList>
            <person name="Mural R.J."/>
            <person name="Istrail S."/>
            <person name="Sutton G.G."/>
            <person name="Florea L."/>
            <person name="Halpern A.L."/>
            <person name="Mobarry C.M."/>
            <person name="Lippert R."/>
            <person name="Walenz B."/>
            <person name="Shatkay H."/>
            <person name="Dew I."/>
            <person name="Miller J.R."/>
            <person name="Flanigan M.J."/>
            <person name="Edwards N.J."/>
            <person name="Bolanos R."/>
            <person name="Fasulo D."/>
            <person name="Halldorsson B.V."/>
            <person name="Hannenhalli S."/>
            <person name="Turner R."/>
            <person name="Yooseph S."/>
            <person name="Lu F."/>
            <person name="Nusskern D.R."/>
            <person name="Shue B.C."/>
            <person name="Zheng X.H."/>
            <person name="Zhong F."/>
            <person name="Delcher A.L."/>
            <person name="Huson D.H."/>
            <person name="Kravitz S.A."/>
            <person name="Mouchard L."/>
            <person name="Reinert K."/>
            <person name="Remington K.A."/>
            <person name="Clark A.G."/>
            <person name="Waterman M.S."/>
            <person name="Eichler E.E."/>
            <person name="Adams M.D."/>
            <person name="Hunkapiller M.W."/>
            <person name="Myers E.W."/>
            <person name="Venter J.C."/>
        </authorList>
    </citation>
    <scope>NUCLEOTIDE SEQUENCE [LARGE SCALE GENOMIC DNA]</scope>
    <scope>VARIANT THR-455</scope>
</reference>
<reference key="6">
    <citation type="journal article" date="2004" name="Genome Res.">
        <title>The status, quality, and expansion of the NIH full-length cDNA project: the Mammalian Gene Collection (MGC).</title>
        <authorList>
            <consortium name="The MGC Project Team"/>
        </authorList>
    </citation>
    <scope>NUCLEOTIDE SEQUENCE [LARGE SCALE MRNA] (ISOFORM 2)</scope>
    <source>
        <tissue>Spleen</tissue>
    </source>
</reference>
<reference key="7">
    <citation type="journal article" date="1992" name="J. Exp. Med.">
        <title>Characterization of the lymphocyte activation gene 3-encoded protein. A new ligand for human leukocyte antigen class II antigens.</title>
        <authorList>
            <person name="Baixeras E."/>
            <person name="Huard B."/>
            <person name="Miossec C."/>
            <person name="Jitsukawa S."/>
            <person name="Martin M."/>
            <person name="Hercend T."/>
            <person name="Auffray C."/>
            <person name="Triebel F."/>
            <person name="Piatier-Tonneau D."/>
        </authorList>
    </citation>
    <scope>SUBCELLULAR LOCATION</scope>
    <scope>TISSUE SPECIFICITY</scope>
</reference>
<reference key="8">
    <citation type="journal article" date="1994" name="Eur. J. Immunol.">
        <title>Lymphocyte-activation gene 3/major histocompatibility complex class II interaction modulates the antigenic response of CD4+ T lymphocytes.</title>
        <authorList>
            <person name="Huard B."/>
            <person name="Tournier M."/>
            <person name="Hercend T."/>
            <person name="Triebel F."/>
            <person name="Faure F."/>
        </authorList>
    </citation>
    <scope>FUNCTION</scope>
</reference>
<reference key="9">
    <citation type="journal article" date="1995" name="Eur. J. Immunol.">
        <title>CD4/major histocompatibility complex class II interaction analyzed with CD4- and lymphocyte activation gene-3 (LAG-3)-Ig fusion proteins.</title>
        <authorList>
            <person name="Huard B."/>
            <person name="Prigent P."/>
            <person name="Tournier M."/>
            <person name="Bruniquel D."/>
            <person name="Triebel F."/>
        </authorList>
    </citation>
    <scope>INTERACTION WITH MHC-II</scope>
</reference>
<reference key="10">
    <citation type="journal article" date="1996" name="Eur. J. Immunol.">
        <title>T cell major histocompatibility complex class II molecules down-regulate CD4+ T cell clone responses following LAG-3 binding.</title>
        <authorList>
            <person name="Huard B."/>
            <person name="Prigent P."/>
            <person name="Pages F."/>
            <person name="Bruniquel D."/>
            <person name="Triebel F."/>
        </authorList>
    </citation>
    <scope>FUNCTION</scope>
    <scope>INTERACTION WITH MHC-II</scope>
</reference>
<reference key="11">
    <citation type="journal article" date="1997" name="Proc. Natl. Acad. Sci. U.S.A.">
        <title>Characterization of the major histocompatibility complex class II binding site on LAG-3 protein.</title>
        <authorList>
            <person name="Huard B."/>
            <person name="Mastrangeli R."/>
            <person name="Prigent P."/>
            <person name="Bruniquel D."/>
            <person name="Donini S."/>
            <person name="El-Tayar N."/>
            <person name="Maigret B."/>
            <person name="Dreano M."/>
            <person name="Triebel F."/>
        </authorList>
    </citation>
    <scope>INTERACTION WITH MHC-II</scope>
    <scope>MUTAGENESIS OF GLN-35; ASP-52; HIS-78; HIS-85; ARG-95; ARG-97; ARG-98; TYR-99; ARG-110; ARG-125; ARG-129; ASP-131; ARG-137; 155-ASP-ARG-156 AND ASP-247</scope>
</reference>
<reference key="12">
    <citation type="journal article" date="1998" name="Immunogenetics">
        <title>Regulation of expression of the human lymphocyte activation gene-3 (LAG-3) molecule, a ligand for MHC class II.</title>
        <authorList>
            <person name="Bruniquel D."/>
            <person name="Borie N."/>
            <person name="Hannier S."/>
            <person name="Triebel F."/>
        </authorList>
    </citation>
    <scope>INDUCTION</scope>
</reference>
<reference key="13">
    <citation type="journal article" date="2010" name="J. Immunol.">
        <title>LAG-3 expression defines a subset of CD4(+)CD25(high)Foxp3(+) regulatory T cells that are expanded at tumor sites.</title>
        <authorList>
            <person name="Camisaschi C."/>
            <person name="Casati C."/>
            <person name="Rini F."/>
            <person name="Perego M."/>
            <person name="De Filippo A."/>
            <person name="Triebel F."/>
            <person name="Parmiani G."/>
            <person name="Belli F."/>
            <person name="Rivoltini L."/>
            <person name="Castelli C."/>
        </authorList>
    </citation>
    <scope>FUNCTION</scope>
    <scope>TISSUE SPECIFICITY</scope>
</reference>
<reference key="14">
    <citation type="journal article" date="2018" name="Cell">
        <title>Fibrinogen-like protein 1 is a major immune inhibitory ligand of LAG-3.</title>
        <authorList>
            <person name="Wang J."/>
            <person name="Sanmamed M.F."/>
            <person name="Datar I."/>
            <person name="Su T.T."/>
            <person name="Ji L."/>
            <person name="Sun J."/>
            <person name="Chen L."/>
            <person name="Chen Y."/>
            <person name="Zhu G."/>
            <person name="Yin W."/>
            <person name="Zheng L."/>
            <person name="Zhou T."/>
            <person name="Badri T."/>
            <person name="Yao S."/>
            <person name="Zhu S."/>
            <person name="Boto A."/>
            <person name="Sznol M."/>
            <person name="Melero I."/>
            <person name="Vignali D.A.A."/>
            <person name="Schalper K."/>
            <person name="Chen L."/>
        </authorList>
    </citation>
    <scope>INTERACTION WITH FGL1</scope>
    <scope>MUTAGENESIS OF TYR-99</scope>
</reference>
<protein>
    <recommendedName>
        <fullName evidence="17">Lymphocyte activation gene 3 protein</fullName>
        <shortName evidence="17">LAG-3</shortName>
    </recommendedName>
    <cdAntigenName>CD223</cdAntigenName>
    <component>
        <recommendedName>
            <fullName evidence="18">Secreted lymphocyte activation gene 3 protein</fullName>
            <shortName evidence="1">sLAG-3</shortName>
        </recommendedName>
    </component>
</protein>
<comment type="function">
    <text evidence="1 8 11 12">Lymphocyte activation gene 3 protein: Inhibitory receptor on antigen activated T-cells (PubMed:20421648, PubMed:7805750, PubMed:8647185). Delivers inhibitory signals upon binding to ligands, such as FGL1 (By similarity). FGL1 constitutes a major ligand of LAG3 and is responsible for LAG3 T-cell inhibitory function (By similarity). Following TCR engagement, LAG3 associates with CD3-TCR in the immunological synapse and directly inhibits T-cell activation (By similarity). May inhibit antigen-specific T-cell activation in synergy with PDCD1/PD-1, possibly by acting as a coreceptor for PDCD1/PD-1 (By similarity). Negatively regulates the proliferation, activation, effector function and homeostasis of both CD8(+) and CD4(+) T-cells (PubMed:20421648, PubMed:7805750, PubMed:8647185). Also mediates immune tolerance: constitutively expressed on a subset of regulatory T-cells (Tregs) and contributes to their suppressive function (By similarity). Also acts as a negative regulator of plasmacytoid dendritic cell (pDCs) activation (By similarity). Binds MHC class II (MHC-II); the precise role of MHC-II-binding is however unclear (PubMed:8647185).</text>
</comment>
<comment type="function">
    <molecule>Secreted lymphocyte activation gene 3 protein</molecule>
    <text evidence="1">May function as a ligand for MHC class II (MHC-II) on antigen-presenting cells (APC), promoting APC activation/maturation and driving Th1 immune response.</text>
</comment>
<comment type="subunit">
    <text evidence="7 9 10 12 13">Interacts with MHC class II (MHC-II); selectively recognizes stable complexes of peptide and MHC-II (PubMed:1692078, PubMed:7589152, PubMed:8647185, PubMed:9159144). Interacts with FGL1 (via the Fibrinogen C-terminal domain) (PubMed:30580966).</text>
</comment>
<comment type="interaction">
    <interactant intactId="EBI-2830752">
        <id>P18627</id>
    </interactant>
    <interactant intactId="EBI-3934830">
        <id>Q08830</id>
        <label>FGL1</label>
    </interactant>
    <organismsDiffer>false</organismsDiffer>
    <experiments>3</experiments>
</comment>
<comment type="interaction">
    <interactant intactId="EBI-2830752">
        <id>P18627</id>
    </interactant>
    <interactant intactId="EBI-34579174">
        <id>Q71KU9</id>
        <label>Fgl1</label>
    </interactant>
    <organismsDiffer>true</organismsDiffer>
    <experiments>2</experiments>
</comment>
<comment type="subcellular location">
    <molecule>Lymphocyte activation gene 3 protein</molecule>
    <subcellularLocation>
        <location evidence="5 7 14">Cell membrane</location>
        <topology evidence="2">Single-pass type I membrane protein</topology>
    </subcellularLocation>
</comment>
<comment type="subcellular location">
    <molecule>Secreted lymphocyte activation gene 3 protein</molecule>
    <subcellularLocation>
        <location evidence="1">Secreted</location>
    </subcellularLocation>
    <text evidence="1">Produced following cleavage of the main chain.</text>
</comment>
<comment type="alternative products">
    <event type="alternative splicing"/>
    <isoform>
        <id>P18627-1</id>
        <name>1</name>
        <sequence type="displayed"/>
    </isoform>
    <isoform>
        <id>P18627-2</id>
        <name>2</name>
        <sequence type="described" ref="VSP_056311 VSP_056312"/>
    </isoform>
</comment>
<comment type="tissue specificity">
    <text evidence="5 7 8">Primarily expressed in activated T-cells and a subset of natural killer (NK) cells.</text>
</comment>
<comment type="induction">
    <text evidence="14">Expression is induced by interleukin-2 (IL2), interleukin-7 (IL7) and interleukin-12 (IL12A and IL12B) on activated T-cells.</text>
</comment>
<comment type="domain">
    <molecule>Lymphocyte activation gene 3 protein</molecule>
    <text evidence="1">The KIEELE motif is required for interaction with downstream signaling molecules.</text>
</comment>
<comment type="PTM">
    <molecule>Lymphocyte activation gene 3 protein</molecule>
    <text evidence="1">Proteolytically cleaved by ADAM10 and ADAM17 within the connecting peptide region, leading to release of Secreted lymphocyte activation gene 3 protein (sLAG-3). ADAM10 mediates constitutive cleavage, but cleavage increases following T-cell activation, whereas shedding by ADAM17 is induced by TCR signaling in a PRKCQ-dependent manner.</text>
</comment>
<comment type="similarity">
    <text evidence="18">Belongs to the LAG3 family.</text>
</comment>
<keyword id="KW-0002">3D-structure</keyword>
<keyword id="KW-1064">Adaptive immunity</keyword>
<keyword id="KW-0025">Alternative splicing</keyword>
<keyword id="KW-1003">Cell membrane</keyword>
<keyword id="KW-1015">Disulfide bond</keyword>
<keyword id="KW-0325">Glycoprotein</keyword>
<keyword id="KW-0391">Immunity</keyword>
<keyword id="KW-0393">Immunoglobulin domain</keyword>
<keyword id="KW-0472">Membrane</keyword>
<keyword id="KW-1267">Proteomics identification</keyword>
<keyword id="KW-1185">Reference proteome</keyword>
<keyword id="KW-0677">Repeat</keyword>
<keyword id="KW-0964">Secreted</keyword>
<keyword id="KW-0732">Signal</keyword>
<keyword id="KW-0812">Transmembrane</keyword>
<keyword id="KW-1133">Transmembrane helix</keyword>
<accession>P18627</accession>
<accession>A8K7T9</accession>
<accession>Q7Z643</accession>
<sequence>MWEAQFLGLLFLQPLWVAPVKPLQPGAEVPVVWAQEGAPAQLPCSPTIPLQDLSLLRRAGVTWQHQPDSGPPAAAPGHPLAPGPHPAAPSSWGPRPRRYTVLSVGPGGLRSGRLPLQPRVQLDERGRQRGDFSLWLRPARRADAGEYRAAVHLRDRALSCRLRLRLGQASMTASPPGSLRASDWVILNCSFSRPDRPASVHWFRNRGQGRVPVRESPHHHLAESFLFLPQVSPMDSGPWGCILTYRDGFNVSIMYNLTVLGLEPPTPLTVYAGAGSRVGLPCRLPAGVGTRSFLTAKWTPPGGGPDLLVTGDNGDFTLRLEDVSQAQAGTYTCHIHLQEQQLNATVTLAIITVTPKSFGSPGSLGKLLCEVTPVSGQERFVWSSLDTPSQRSFSGPWLEAQEAQLLSQPWQCQLYQGERLLGAAVYFTELSSPGAQRSGRAPGALPAGHLLLFLILGVLSLLLLVTGAFGFHLWRRQWRPRRFSALEQGIHPPQAQSKIEELEQEPEPEPEPEPEPEPEPEPEQL</sequence>
<gene>
    <name evidence="19" type="primary">LAG3</name>
    <name type="synonym">FDC</name>
</gene>
<dbReference type="EMBL" id="X51985">
    <property type="protein sequence ID" value="CAA36243.3"/>
    <property type="molecule type" value="mRNA"/>
</dbReference>
<dbReference type="EMBL" id="AK292104">
    <property type="protein sequence ID" value="BAF84793.1"/>
    <property type="molecule type" value="mRNA"/>
</dbReference>
<dbReference type="EMBL" id="AC125494">
    <property type="status" value="NOT_ANNOTATED_CDS"/>
    <property type="molecule type" value="Genomic_DNA"/>
</dbReference>
<dbReference type="EMBL" id="CH471116">
    <property type="protein sequence ID" value="EAW88741.1"/>
    <property type="molecule type" value="Genomic_DNA"/>
</dbReference>
<dbReference type="EMBL" id="BC052589">
    <property type="protein sequence ID" value="AAH52589.1"/>
    <property type="molecule type" value="mRNA"/>
</dbReference>
<dbReference type="CCDS" id="CCDS8561.1">
    <molecule id="P18627-1"/>
</dbReference>
<dbReference type="PIR" id="S11246">
    <property type="entry name" value="S11246"/>
</dbReference>
<dbReference type="RefSeq" id="NP_002277.4">
    <molecule id="P18627-1"/>
    <property type="nucleotide sequence ID" value="NM_002286.5"/>
</dbReference>
<dbReference type="PDB" id="7TZG">
    <property type="method" value="X-ray"/>
    <property type="resolution" value="3.71 A"/>
    <property type="chains" value="C/D=23-430"/>
</dbReference>
<dbReference type="PDB" id="7TZH">
    <property type="method" value="X-ray"/>
    <property type="resolution" value="2.43 A"/>
    <property type="chains" value="B/D=261-450"/>
</dbReference>
<dbReference type="PDB" id="7UM3">
    <property type="method" value="X-ray"/>
    <property type="resolution" value="2.40 A"/>
    <property type="chains" value="A/B=82-97"/>
</dbReference>
<dbReference type="PDB" id="8SO3">
    <property type="method" value="EM"/>
    <property type="resolution" value="3.61 A"/>
    <property type="chains" value="D/X=1-525"/>
</dbReference>
<dbReference type="PDB" id="8SR0">
    <property type="method" value="EM"/>
    <property type="resolution" value="3.53 A"/>
    <property type="chains" value="D/X=1-525"/>
</dbReference>
<dbReference type="PDB" id="9BF9">
    <property type="method" value="X-ray"/>
    <property type="resolution" value="3.40 A"/>
    <property type="chains" value="D=23-429"/>
</dbReference>
<dbReference type="PDBsum" id="7TZG"/>
<dbReference type="PDBsum" id="7TZH"/>
<dbReference type="PDBsum" id="7UM3"/>
<dbReference type="PDBsum" id="8SO3"/>
<dbReference type="PDBsum" id="8SR0"/>
<dbReference type="PDBsum" id="9BF9"/>
<dbReference type="EMDB" id="EMD-40646"/>
<dbReference type="EMDB" id="EMD-40716"/>
<dbReference type="SMR" id="P18627"/>
<dbReference type="BioGRID" id="110097">
    <property type="interactions" value="26"/>
</dbReference>
<dbReference type="CORUM" id="P18627"/>
<dbReference type="FunCoup" id="P18627">
    <property type="interactions" value="458"/>
</dbReference>
<dbReference type="IntAct" id="P18627">
    <property type="interactions" value="19"/>
</dbReference>
<dbReference type="STRING" id="9606.ENSP00000203629"/>
<dbReference type="ChEMBL" id="CHEMBL4630881"/>
<dbReference type="DrugBank" id="DB14851">
    <property type="generic name" value="Relatlimab"/>
</dbReference>
<dbReference type="DrugCentral" id="P18627"/>
<dbReference type="GlyCosmos" id="P18627">
    <property type="glycosylation" value="4 sites, No reported glycans"/>
</dbReference>
<dbReference type="GlyGen" id="P18627">
    <property type="glycosylation" value="4 sites"/>
</dbReference>
<dbReference type="iPTMnet" id="P18627"/>
<dbReference type="PhosphoSitePlus" id="P18627"/>
<dbReference type="BioMuta" id="LAG3"/>
<dbReference type="DMDM" id="251757512"/>
<dbReference type="MassIVE" id="P18627"/>
<dbReference type="PaxDb" id="9606-ENSP00000203629"/>
<dbReference type="PeptideAtlas" id="P18627"/>
<dbReference type="ProteomicsDB" id="53604">
    <molecule id="P18627-1"/>
</dbReference>
<dbReference type="ABCD" id="P18627">
    <property type="antibodies" value="119 sequenced antibodies"/>
</dbReference>
<dbReference type="Antibodypedia" id="2267">
    <property type="antibodies" value="1433 antibodies from 40 providers"/>
</dbReference>
<dbReference type="CPTC" id="P18627">
    <property type="antibodies" value="1 antibody"/>
</dbReference>
<dbReference type="DNASU" id="3902"/>
<dbReference type="Ensembl" id="ENST00000203629.3">
    <molecule id="P18627-1"/>
    <property type="protein sequence ID" value="ENSP00000203629.2"/>
    <property type="gene ID" value="ENSG00000089692.9"/>
</dbReference>
<dbReference type="Ensembl" id="ENST00000441671.6">
    <molecule id="P18627-2"/>
    <property type="protein sequence ID" value="ENSP00000413825.2"/>
    <property type="gene ID" value="ENSG00000089692.9"/>
</dbReference>
<dbReference type="GeneID" id="3902"/>
<dbReference type="KEGG" id="hsa:3902"/>
<dbReference type="MANE-Select" id="ENST00000203629.3">
    <property type="protein sequence ID" value="ENSP00000203629.2"/>
    <property type="RefSeq nucleotide sequence ID" value="NM_002286.6"/>
    <property type="RefSeq protein sequence ID" value="NP_002277.4"/>
</dbReference>
<dbReference type="UCSC" id="uc001qqs.4">
    <molecule id="P18627-1"/>
    <property type="organism name" value="human"/>
</dbReference>
<dbReference type="AGR" id="HGNC:6476"/>
<dbReference type="CTD" id="3902"/>
<dbReference type="DisGeNET" id="3902"/>
<dbReference type="GeneCards" id="LAG3"/>
<dbReference type="HGNC" id="HGNC:6476">
    <property type="gene designation" value="LAG3"/>
</dbReference>
<dbReference type="HPA" id="ENSG00000089692">
    <property type="expression patterns" value="Tissue enhanced (choroid plexus, lymphoid tissue, ovary)"/>
</dbReference>
<dbReference type="MIM" id="153337">
    <property type="type" value="gene"/>
</dbReference>
<dbReference type="neXtProt" id="NX_P18627"/>
<dbReference type="OpenTargets" id="ENSG00000089692"/>
<dbReference type="PharmGKB" id="PA30265"/>
<dbReference type="VEuPathDB" id="HostDB:ENSG00000089692"/>
<dbReference type="eggNOG" id="ENOG502S2HD">
    <property type="taxonomic scope" value="Eukaryota"/>
</dbReference>
<dbReference type="GeneTree" id="ENSGT01090000259985"/>
<dbReference type="HOGENOM" id="CLU_041154_0_0_1"/>
<dbReference type="InParanoid" id="P18627"/>
<dbReference type="OMA" id="LWVAPVE"/>
<dbReference type="OrthoDB" id="9937043at2759"/>
<dbReference type="PAN-GO" id="P18627">
    <property type="GO annotations" value="2 GO annotations based on evolutionary models"/>
</dbReference>
<dbReference type="PhylomeDB" id="P18627"/>
<dbReference type="TreeFam" id="TF335942"/>
<dbReference type="PathwayCommons" id="P18627"/>
<dbReference type="Reactome" id="R-HSA-2132295">
    <property type="pathway name" value="MHC class II antigen presentation"/>
</dbReference>
<dbReference type="SignaLink" id="P18627"/>
<dbReference type="SIGNOR" id="P18627"/>
<dbReference type="BioGRID-ORCS" id="3902">
    <property type="hits" value="9 hits in 1149 CRISPR screens"/>
</dbReference>
<dbReference type="GeneWiki" id="LAG3"/>
<dbReference type="GenomeRNAi" id="3902"/>
<dbReference type="Pharos" id="P18627">
    <property type="development level" value="Tclin"/>
</dbReference>
<dbReference type="PRO" id="PR:P18627"/>
<dbReference type="Proteomes" id="UP000005640">
    <property type="component" value="Chromosome 12"/>
</dbReference>
<dbReference type="RNAct" id="P18627">
    <property type="molecule type" value="protein"/>
</dbReference>
<dbReference type="Bgee" id="ENSG00000089692">
    <property type="expression patterns" value="Expressed in granulocyte and 90 other cell types or tissues"/>
</dbReference>
<dbReference type="GO" id="GO:0009986">
    <property type="term" value="C:cell surface"/>
    <property type="evidence" value="ECO:0000318"/>
    <property type="project" value="GO_Central"/>
</dbReference>
<dbReference type="GO" id="GO:0009897">
    <property type="term" value="C:external side of plasma membrane"/>
    <property type="evidence" value="ECO:0007669"/>
    <property type="project" value="Ensembl"/>
</dbReference>
<dbReference type="GO" id="GO:0005576">
    <property type="term" value="C:extracellular region"/>
    <property type="evidence" value="ECO:0007669"/>
    <property type="project" value="UniProtKB-SubCell"/>
</dbReference>
<dbReference type="GO" id="GO:0005886">
    <property type="term" value="C:plasma membrane"/>
    <property type="evidence" value="ECO:0000318"/>
    <property type="project" value="GO_Central"/>
</dbReference>
<dbReference type="GO" id="GO:0003823">
    <property type="term" value="F:antigen binding"/>
    <property type="evidence" value="ECO:0000304"/>
    <property type="project" value="ProtInc"/>
</dbReference>
<dbReference type="GO" id="GO:0042289">
    <property type="term" value="F:MHC class II protein binding"/>
    <property type="evidence" value="ECO:0000314"/>
    <property type="project" value="MGI"/>
</dbReference>
<dbReference type="GO" id="GO:0004888">
    <property type="term" value="F:transmembrane signaling receptor activity"/>
    <property type="evidence" value="ECO:0000318"/>
    <property type="project" value="GO_Central"/>
</dbReference>
<dbReference type="GO" id="GO:0002250">
    <property type="term" value="P:adaptive immune response"/>
    <property type="evidence" value="ECO:0007669"/>
    <property type="project" value="UniProtKB-KW"/>
</dbReference>
<dbReference type="GO" id="GO:0007166">
    <property type="term" value="P:cell surface receptor signaling pathway"/>
    <property type="evidence" value="ECO:0000250"/>
    <property type="project" value="UniProtKB"/>
</dbReference>
<dbReference type="GO" id="GO:0045087">
    <property type="term" value="P:innate immune response"/>
    <property type="evidence" value="ECO:0000318"/>
    <property type="project" value="GO_Central"/>
</dbReference>
<dbReference type="GO" id="GO:0042267">
    <property type="term" value="P:natural killer cell mediated cytotoxicity"/>
    <property type="evidence" value="ECO:0007669"/>
    <property type="project" value="Ensembl"/>
</dbReference>
<dbReference type="GO" id="GO:0032703">
    <property type="term" value="P:negative regulation of interleukin-2 production"/>
    <property type="evidence" value="ECO:0007669"/>
    <property type="project" value="Ensembl"/>
</dbReference>
<dbReference type="GO" id="GO:0045590">
    <property type="term" value="P:negative regulation of regulatory T cell differentiation"/>
    <property type="evidence" value="ECO:0000250"/>
    <property type="project" value="UniProtKB"/>
</dbReference>
<dbReference type="GO" id="GO:0002270">
    <property type="term" value="P:plasmacytoid dendritic cell activation"/>
    <property type="evidence" value="ECO:0000250"/>
    <property type="project" value="UniProtKB"/>
</dbReference>
<dbReference type="GO" id="GO:0045954">
    <property type="term" value="P:positive regulation of natural killer cell mediated cytotoxicity"/>
    <property type="evidence" value="ECO:0007669"/>
    <property type="project" value="Ensembl"/>
</dbReference>
<dbReference type="GO" id="GO:0050776">
    <property type="term" value="P:regulation of immune response"/>
    <property type="evidence" value="ECO:0000250"/>
    <property type="project" value="UniProtKB"/>
</dbReference>
<dbReference type="GO" id="GO:0042110">
    <property type="term" value="P:T cell activation"/>
    <property type="evidence" value="ECO:0007669"/>
    <property type="project" value="Ensembl"/>
</dbReference>
<dbReference type="CDD" id="cd00096">
    <property type="entry name" value="Ig"/>
    <property type="match status" value="1"/>
</dbReference>
<dbReference type="FunFam" id="2.60.40.10:FF:003032">
    <property type="entry name" value="Lymphocyte activating 3"/>
    <property type="match status" value="1"/>
</dbReference>
<dbReference type="FunFam" id="2.60.40.10:FF:002440">
    <property type="entry name" value="Lymphocyte activation gene 3 protein"/>
    <property type="match status" value="1"/>
</dbReference>
<dbReference type="FunFam" id="2.60.40.10:FF:000806">
    <property type="entry name" value="Matrix remodeling associated 8"/>
    <property type="match status" value="1"/>
</dbReference>
<dbReference type="Gene3D" id="2.60.40.10">
    <property type="entry name" value="Immunoglobulins"/>
    <property type="match status" value="3"/>
</dbReference>
<dbReference type="InterPro" id="IPR007110">
    <property type="entry name" value="Ig-like_dom"/>
</dbReference>
<dbReference type="InterPro" id="IPR036179">
    <property type="entry name" value="Ig-like_dom_sf"/>
</dbReference>
<dbReference type="InterPro" id="IPR013783">
    <property type="entry name" value="Ig-like_fold"/>
</dbReference>
<dbReference type="InterPro" id="IPR003599">
    <property type="entry name" value="Ig_sub"/>
</dbReference>
<dbReference type="InterPro" id="IPR015621">
    <property type="entry name" value="IL-1_rcpt_fam"/>
</dbReference>
<dbReference type="PANTHER" id="PTHR11890">
    <property type="entry name" value="INTERLEUKIN-1 RECEPTOR FAMILY MEMBER"/>
    <property type="match status" value="1"/>
</dbReference>
<dbReference type="PANTHER" id="PTHR11890:SF18">
    <property type="entry name" value="LYMPHOCYTE ACTIVATION GENE 3 PROTEIN"/>
    <property type="match status" value="1"/>
</dbReference>
<dbReference type="SMART" id="SM00409">
    <property type="entry name" value="IG"/>
    <property type="match status" value="3"/>
</dbReference>
<dbReference type="SUPFAM" id="SSF48726">
    <property type="entry name" value="Immunoglobulin"/>
    <property type="match status" value="3"/>
</dbReference>
<dbReference type="PROSITE" id="PS50835">
    <property type="entry name" value="IG_LIKE"/>
    <property type="match status" value="2"/>
</dbReference>
<evidence type="ECO:0000250" key="1">
    <source>
        <dbReference type="UniProtKB" id="Q61790"/>
    </source>
</evidence>
<evidence type="ECO:0000255" key="2"/>
<evidence type="ECO:0000255" key="3">
    <source>
        <dbReference type="PROSITE-ProRule" id="PRU00114"/>
    </source>
</evidence>
<evidence type="ECO:0000256" key="4">
    <source>
        <dbReference type="SAM" id="MobiDB-lite"/>
    </source>
</evidence>
<evidence type="ECO:0000269" key="5">
    <source>
    </source>
</evidence>
<evidence type="ECO:0000269" key="6">
    <source>
    </source>
</evidence>
<evidence type="ECO:0000269" key="7">
    <source>
    </source>
</evidence>
<evidence type="ECO:0000269" key="8">
    <source>
    </source>
</evidence>
<evidence type="ECO:0000269" key="9">
    <source>
    </source>
</evidence>
<evidence type="ECO:0000269" key="10">
    <source>
    </source>
</evidence>
<evidence type="ECO:0000269" key="11">
    <source>
    </source>
</evidence>
<evidence type="ECO:0000269" key="12">
    <source>
    </source>
</evidence>
<evidence type="ECO:0000269" key="13">
    <source>
    </source>
</evidence>
<evidence type="ECO:0000269" key="14">
    <source>
    </source>
</evidence>
<evidence type="ECO:0000269" key="15">
    <source ref="5"/>
</evidence>
<evidence type="ECO:0000303" key="16">
    <source>
    </source>
</evidence>
<evidence type="ECO:0000303" key="17">
    <source>
    </source>
</evidence>
<evidence type="ECO:0000305" key="18"/>
<evidence type="ECO:0000312" key="19">
    <source>
        <dbReference type="HGNC" id="HGNC:6476"/>
    </source>
</evidence>
<evidence type="ECO:0007829" key="20">
    <source>
        <dbReference type="PDB" id="7TZH"/>
    </source>
</evidence>
<proteinExistence type="evidence at protein level"/>
<organism>
    <name type="scientific">Homo sapiens</name>
    <name type="common">Human</name>
    <dbReference type="NCBI Taxonomy" id="9606"/>
    <lineage>
        <taxon>Eukaryota</taxon>
        <taxon>Metazoa</taxon>
        <taxon>Chordata</taxon>
        <taxon>Craniata</taxon>
        <taxon>Vertebrata</taxon>
        <taxon>Euteleostomi</taxon>
        <taxon>Mammalia</taxon>
        <taxon>Eutheria</taxon>
        <taxon>Euarchontoglires</taxon>
        <taxon>Primates</taxon>
        <taxon>Haplorrhini</taxon>
        <taxon>Catarrhini</taxon>
        <taxon>Hominidae</taxon>
        <taxon>Homo</taxon>
    </lineage>
</organism>